<sequence>MMNHAVARRYARALFELAQEKGLLDQVNRELELVVSMYETDSYLRAFMNDQRISPSQKRKVLASVLEGKVSPLVLHFLYVVVQKRREPHLPSMYRAFQDLANEAMGVVEVEVRSAVPLAEETARNLEAKLTTKLGKRVKLRTQVAPELIGGLAVRVGDTLMDGSVRTRLRRMHERLISAQSNVIEG</sequence>
<protein>
    <recommendedName>
        <fullName evidence="1">ATP synthase subunit delta</fullName>
    </recommendedName>
    <alternativeName>
        <fullName evidence="1">ATP synthase F(1) sector subunit delta</fullName>
    </alternativeName>
    <alternativeName>
        <fullName evidence="1">F-type ATPase subunit delta</fullName>
        <shortName evidence="1">F-ATPase subunit delta</shortName>
    </alternativeName>
</protein>
<name>ATPD_SYMTH</name>
<accession>Q67TC0</accession>
<proteinExistence type="inferred from homology"/>
<feature type="chain" id="PRO_0000371173" description="ATP synthase subunit delta">
    <location>
        <begin position="1"/>
        <end position="186"/>
    </location>
</feature>
<evidence type="ECO:0000255" key="1">
    <source>
        <dbReference type="HAMAP-Rule" id="MF_01416"/>
    </source>
</evidence>
<comment type="function">
    <text evidence="1">F(1)F(0) ATP synthase produces ATP from ADP in the presence of a proton or sodium gradient. F-type ATPases consist of two structural domains, F(1) containing the extramembraneous catalytic core and F(0) containing the membrane proton channel, linked together by a central stalk and a peripheral stalk. During catalysis, ATP synthesis in the catalytic domain of F(1) is coupled via a rotary mechanism of the central stalk subunits to proton translocation.</text>
</comment>
<comment type="function">
    <text evidence="1">This protein is part of the stalk that links CF(0) to CF(1). It either transmits conformational changes from CF(0) to CF(1) or is implicated in proton conduction.</text>
</comment>
<comment type="subunit">
    <text evidence="1">F-type ATPases have 2 components, F(1) - the catalytic core - and F(0) - the membrane proton channel. F(1) has five subunits: alpha(3), beta(3), gamma(1), delta(1), epsilon(1). F(0) has three main subunits: a(1), b(2) and c(10-14). The alpha and beta chains form an alternating ring which encloses part of the gamma chain. F(1) is attached to F(0) by a central stalk formed by the gamma and epsilon chains, while a peripheral stalk is formed by the delta and b chains.</text>
</comment>
<comment type="subcellular location">
    <subcellularLocation>
        <location evidence="1">Cell membrane</location>
        <topology evidence="1">Peripheral membrane protein</topology>
    </subcellularLocation>
</comment>
<comment type="similarity">
    <text evidence="1">Belongs to the ATPase delta chain family.</text>
</comment>
<organism>
    <name type="scientific">Symbiobacterium thermophilum (strain DSM 24528 / JCM 14929 / IAM 14863 / T)</name>
    <dbReference type="NCBI Taxonomy" id="292459"/>
    <lineage>
        <taxon>Bacteria</taxon>
        <taxon>Bacillati</taxon>
        <taxon>Bacillota</taxon>
        <taxon>Clostridia</taxon>
        <taxon>Eubacteriales</taxon>
        <taxon>Symbiobacteriaceae</taxon>
        <taxon>Symbiobacterium</taxon>
    </lineage>
</organism>
<reference key="1">
    <citation type="journal article" date="2004" name="Nucleic Acids Res.">
        <title>Genome sequence of Symbiobacterium thermophilum, an uncultivable bacterium that depends on microbial commensalism.</title>
        <authorList>
            <person name="Ueda K."/>
            <person name="Yamashita A."/>
            <person name="Ishikawa J."/>
            <person name="Shimada M."/>
            <person name="Watsuji T."/>
            <person name="Morimura K."/>
            <person name="Ikeda H."/>
            <person name="Hattori M."/>
            <person name="Beppu T."/>
        </authorList>
    </citation>
    <scope>NUCLEOTIDE SEQUENCE [LARGE SCALE GENOMIC DNA]</scope>
    <source>
        <strain>DSM 24528 / JCM 14929 / IAM 14863 / T</strain>
    </source>
</reference>
<keyword id="KW-0066">ATP synthesis</keyword>
<keyword id="KW-1003">Cell membrane</keyword>
<keyword id="KW-0139">CF(1)</keyword>
<keyword id="KW-0375">Hydrogen ion transport</keyword>
<keyword id="KW-0406">Ion transport</keyword>
<keyword id="KW-0472">Membrane</keyword>
<keyword id="KW-1185">Reference proteome</keyword>
<keyword id="KW-0813">Transport</keyword>
<dbReference type="EMBL" id="AP006840">
    <property type="protein sequence ID" value="BAD39073.1"/>
    <property type="molecule type" value="Genomic_DNA"/>
</dbReference>
<dbReference type="RefSeq" id="WP_011194223.1">
    <property type="nucleotide sequence ID" value="NC_006177.1"/>
</dbReference>
<dbReference type="SMR" id="Q67TC0"/>
<dbReference type="STRING" id="292459.STH88"/>
<dbReference type="KEGG" id="sth:STH88"/>
<dbReference type="eggNOG" id="COG0712">
    <property type="taxonomic scope" value="Bacteria"/>
</dbReference>
<dbReference type="HOGENOM" id="CLU_085114_1_1_9"/>
<dbReference type="OrthoDB" id="9802471at2"/>
<dbReference type="Proteomes" id="UP000000417">
    <property type="component" value="Chromosome"/>
</dbReference>
<dbReference type="GO" id="GO:0005886">
    <property type="term" value="C:plasma membrane"/>
    <property type="evidence" value="ECO:0007669"/>
    <property type="project" value="UniProtKB-SubCell"/>
</dbReference>
<dbReference type="GO" id="GO:0045259">
    <property type="term" value="C:proton-transporting ATP synthase complex"/>
    <property type="evidence" value="ECO:0007669"/>
    <property type="project" value="UniProtKB-KW"/>
</dbReference>
<dbReference type="GO" id="GO:0046933">
    <property type="term" value="F:proton-transporting ATP synthase activity, rotational mechanism"/>
    <property type="evidence" value="ECO:0007669"/>
    <property type="project" value="UniProtKB-UniRule"/>
</dbReference>
<dbReference type="Gene3D" id="1.10.520.20">
    <property type="entry name" value="N-terminal domain of the delta subunit of the F1F0-ATP synthase"/>
    <property type="match status" value="1"/>
</dbReference>
<dbReference type="HAMAP" id="MF_01416">
    <property type="entry name" value="ATP_synth_delta_bact"/>
    <property type="match status" value="1"/>
</dbReference>
<dbReference type="InterPro" id="IPR026015">
    <property type="entry name" value="ATP_synth_OSCP/delta_N_sf"/>
</dbReference>
<dbReference type="InterPro" id="IPR000711">
    <property type="entry name" value="ATPase_OSCP/dsu"/>
</dbReference>
<dbReference type="NCBIfam" id="TIGR01145">
    <property type="entry name" value="ATP_synt_delta"/>
    <property type="match status" value="1"/>
</dbReference>
<dbReference type="NCBIfam" id="NF004402">
    <property type="entry name" value="PRK05758.2-2"/>
    <property type="match status" value="1"/>
</dbReference>
<dbReference type="NCBIfam" id="NF004403">
    <property type="entry name" value="PRK05758.2-4"/>
    <property type="match status" value="1"/>
</dbReference>
<dbReference type="PANTHER" id="PTHR11910">
    <property type="entry name" value="ATP SYNTHASE DELTA CHAIN"/>
    <property type="match status" value="1"/>
</dbReference>
<dbReference type="Pfam" id="PF00213">
    <property type="entry name" value="OSCP"/>
    <property type="match status" value="1"/>
</dbReference>
<dbReference type="PRINTS" id="PR00125">
    <property type="entry name" value="ATPASEDELTA"/>
</dbReference>
<dbReference type="SUPFAM" id="SSF47928">
    <property type="entry name" value="N-terminal domain of the delta subunit of the F1F0-ATP synthase"/>
    <property type="match status" value="1"/>
</dbReference>
<gene>
    <name evidence="1" type="primary">atpH</name>
    <name type="ordered locus">STH88</name>
</gene>